<accession>P34740</accession>
<keyword id="KW-0325">Glycoprotein</keyword>
<keyword id="KW-0357">Heparan sulfate</keyword>
<keyword id="KW-0472">Membrane</keyword>
<keyword id="KW-0597">Phosphoprotein</keyword>
<keyword id="KW-0654">Proteoglycan</keyword>
<keyword id="KW-1185">Reference proteome</keyword>
<keyword id="KW-0964">Secreted</keyword>
<keyword id="KW-0732">Signal</keyword>
<keyword id="KW-0812">Transmembrane</keyword>
<keyword id="KW-1133">Transmembrane helix</keyword>
<dbReference type="EMBL" id="M29967">
    <property type="protein sequence ID" value="AAA37087.1"/>
    <property type="molecule type" value="mRNA"/>
</dbReference>
<dbReference type="PIR" id="A36064">
    <property type="entry name" value="A36064"/>
</dbReference>
<dbReference type="RefSeq" id="XP_005079125.1">
    <property type="nucleotide sequence ID" value="XM_005079068.2"/>
</dbReference>
<dbReference type="SMR" id="P34740"/>
<dbReference type="STRING" id="10036.ENSMAUP00000005723"/>
<dbReference type="GlyCosmos" id="P34740">
    <property type="glycosylation" value="6 sites, No reported glycans"/>
</dbReference>
<dbReference type="Ensembl" id="ENSMAUT00000009463">
    <property type="protein sequence ID" value="ENSMAUP00000005723"/>
    <property type="gene ID" value="ENSMAUG00000007825"/>
</dbReference>
<dbReference type="GeneID" id="101836998"/>
<dbReference type="KEGG" id="maua:101836998"/>
<dbReference type="CTD" id="6382"/>
<dbReference type="eggNOG" id="ENOG502RZWT">
    <property type="taxonomic scope" value="Eukaryota"/>
</dbReference>
<dbReference type="OrthoDB" id="10044468at2759"/>
<dbReference type="Proteomes" id="UP000189706">
    <property type="component" value="Unplaced"/>
</dbReference>
<dbReference type="GO" id="GO:0009897">
    <property type="term" value="C:external side of plasma membrane"/>
    <property type="evidence" value="ECO:0007669"/>
    <property type="project" value="Ensembl"/>
</dbReference>
<dbReference type="GO" id="GO:0005576">
    <property type="term" value="C:extracellular region"/>
    <property type="evidence" value="ECO:0007669"/>
    <property type="project" value="UniProtKB-SubCell"/>
</dbReference>
<dbReference type="GO" id="GO:0038024">
    <property type="term" value="F:cargo receptor activity"/>
    <property type="evidence" value="ECO:0007669"/>
    <property type="project" value="Ensembl"/>
</dbReference>
<dbReference type="GO" id="GO:0042802">
    <property type="term" value="F:identical protein binding"/>
    <property type="evidence" value="ECO:0007669"/>
    <property type="project" value="Ensembl"/>
</dbReference>
<dbReference type="GO" id="GO:0060070">
    <property type="term" value="P:canonical Wnt signaling pathway"/>
    <property type="evidence" value="ECO:0007669"/>
    <property type="project" value="Ensembl"/>
</dbReference>
<dbReference type="GO" id="GO:0016477">
    <property type="term" value="P:cell migration"/>
    <property type="evidence" value="ECO:0007669"/>
    <property type="project" value="TreeGrafter"/>
</dbReference>
<dbReference type="GO" id="GO:0048627">
    <property type="term" value="P:myoblast development"/>
    <property type="evidence" value="ECO:0007669"/>
    <property type="project" value="Ensembl"/>
</dbReference>
<dbReference type="GO" id="GO:1903543">
    <property type="term" value="P:positive regulation of exosomal secretion"/>
    <property type="evidence" value="ECO:0007669"/>
    <property type="project" value="Ensembl"/>
</dbReference>
<dbReference type="GO" id="GO:1903553">
    <property type="term" value="P:positive regulation of extracellular exosome assembly"/>
    <property type="evidence" value="ECO:0007669"/>
    <property type="project" value="Ensembl"/>
</dbReference>
<dbReference type="GO" id="GO:0006898">
    <property type="term" value="P:receptor-mediated endocytosis"/>
    <property type="evidence" value="ECO:0007669"/>
    <property type="project" value="Ensembl"/>
</dbReference>
<dbReference type="GO" id="GO:0055002">
    <property type="term" value="P:striated muscle cell development"/>
    <property type="evidence" value="ECO:0007669"/>
    <property type="project" value="Ensembl"/>
</dbReference>
<dbReference type="InterPro" id="IPR003585">
    <property type="entry name" value="Neurexin-like"/>
</dbReference>
<dbReference type="InterPro" id="IPR001050">
    <property type="entry name" value="Syndecan"/>
</dbReference>
<dbReference type="InterPro" id="IPR027789">
    <property type="entry name" value="Syndecan/Neurexin_dom"/>
</dbReference>
<dbReference type="InterPro" id="IPR030479">
    <property type="entry name" value="Syndecan_CS"/>
</dbReference>
<dbReference type="PANTHER" id="PTHR10915">
    <property type="entry name" value="SYNDECAN"/>
    <property type="match status" value="1"/>
</dbReference>
<dbReference type="PANTHER" id="PTHR10915:SF5">
    <property type="entry name" value="SYNDECAN-1"/>
    <property type="match status" value="1"/>
</dbReference>
<dbReference type="Pfam" id="PF01034">
    <property type="entry name" value="Syndecan"/>
    <property type="match status" value="1"/>
</dbReference>
<dbReference type="SMART" id="SM00294">
    <property type="entry name" value="4.1m"/>
    <property type="match status" value="1"/>
</dbReference>
<dbReference type="PROSITE" id="PS00964">
    <property type="entry name" value="SYNDECAN"/>
    <property type="match status" value="1"/>
</dbReference>
<protein>
    <recommendedName>
        <fullName evidence="3">Syndecan-1</fullName>
        <shortName evidence="3">SYND1</shortName>
    </recommendedName>
    <cdAntigenName>CD138</cdAntigenName>
</protein>
<proteinExistence type="evidence at transcript level"/>
<evidence type="ECO:0000250" key="1"/>
<evidence type="ECO:0000250" key="2">
    <source>
        <dbReference type="UniProtKB" id="P18827"/>
    </source>
</evidence>
<evidence type="ECO:0000250" key="3">
    <source>
        <dbReference type="UniProtKB" id="P18828"/>
    </source>
</evidence>
<evidence type="ECO:0000250" key="4">
    <source>
        <dbReference type="UniProtKB" id="P26260"/>
    </source>
</evidence>
<evidence type="ECO:0000255" key="5"/>
<evidence type="ECO:0000256" key="6">
    <source>
        <dbReference type="SAM" id="MobiDB-lite"/>
    </source>
</evidence>
<evidence type="ECO:0000305" key="7"/>
<reference key="1">
    <citation type="journal article" date="1990" name="Proc. Natl. Acad. Sci. U.S.A.">
        <title>Ligand-affinity cloning and structure of a cell surface heparan sulfate proteoglycan that binds basic fibroblast growth factor.</title>
        <authorList>
            <person name="Kiefer M.C."/>
            <person name="Stephans J.C."/>
            <person name="Crawford K."/>
            <person name="Okino K."/>
            <person name="Barr P.J."/>
        </authorList>
    </citation>
    <scope>NUCLEOTIDE SEQUENCE [MRNA]</scope>
</reference>
<comment type="function">
    <text evidence="2 3">Cell surface proteoglycan that contains both heparan sulfate and chondroitin sulfate and that links the cytoskeleton to the interstitial matrix (By similarity). Regulates exosome biogenesis in concert with SDCBP and PDCD6IP (By similarity). Able to induce its own expression in dental mesenchymal cells and also in the neighboring dental epithelial cells via an MSX1-mediated pathway (By similarity).</text>
</comment>
<comment type="subunit">
    <text evidence="2 4">Interacts with CDCP1. Interacts (via C-terminus) with TIAM1 (via PDZ domain) (By similarity). Interacts with MDK (By similarity).</text>
</comment>
<comment type="subcellular location">
    <subcellularLocation>
        <location evidence="5">Membrane</location>
        <topology evidence="5">Single-pass type I membrane protein</topology>
    </subcellularLocation>
    <subcellularLocation>
        <location evidence="2">Secreted</location>
    </subcellularLocation>
    <subcellularLocation>
        <location evidence="2">Secreted</location>
        <location evidence="2">Extracellular exosome</location>
    </subcellularLocation>
    <text evidence="2">Shedding of the ectodomain produces a soluble form.</text>
</comment>
<comment type="PTM">
    <text evidence="2">Shedding is enhanced by a number of factors such as heparanase, thrombin or EGF. Also by stress and wound healing. PMA-mediated shedding is inhibited by TIMP3 (By similarity).</text>
</comment>
<comment type="similarity">
    <text evidence="7">Belongs to the syndecan proteoglycan family.</text>
</comment>
<organism>
    <name type="scientific">Mesocricetus auratus</name>
    <name type="common">Golden hamster</name>
    <dbReference type="NCBI Taxonomy" id="10036"/>
    <lineage>
        <taxon>Eukaryota</taxon>
        <taxon>Metazoa</taxon>
        <taxon>Chordata</taxon>
        <taxon>Craniata</taxon>
        <taxon>Vertebrata</taxon>
        <taxon>Euteleostomi</taxon>
        <taxon>Mammalia</taxon>
        <taxon>Eutheria</taxon>
        <taxon>Euarchontoglires</taxon>
        <taxon>Glires</taxon>
        <taxon>Rodentia</taxon>
        <taxon>Myomorpha</taxon>
        <taxon>Muroidea</taxon>
        <taxon>Cricetidae</taxon>
        <taxon>Cricetinae</taxon>
        <taxon>Mesocricetus</taxon>
    </lineage>
</organism>
<gene>
    <name evidence="3" type="primary">SDC1</name>
</gene>
<name>SDC1_MESAU</name>
<sequence length="309" mass="32678">MRRAALWLWLCALALRLQPVLPQIVTVNVPPEDQDGSGDDSDNFSGSGTGALPDITLSRQASPTLKDVWLLTATPTAPEPTSRDAQATTTSILPAAEKPGEGEPVLTAEVDPGFTARDKESEVTTRPRETTQLLITHWVSTARATTAQAPVTSHPHRDVQPGLHETSAPTAPGQPDQQPPSGGTSVIKEVAEDGATNQLPTGEGSGEQDFTFETSGENTAVAAVEPDQRNQPPVDEGATGASQGLLDRKEVLGGVIAGGLVGLIFAVCLVGFMLYRMKKKDEGSYSLEEPKQANGGAYQKPTKQEEFYA</sequence>
<feature type="signal peptide" evidence="5">
    <location>
        <begin position="1"/>
        <end position="22"/>
    </location>
</feature>
<feature type="chain" id="PRO_0000033500" description="Syndecan-1">
    <location>
        <begin position="23"/>
        <end position="309"/>
    </location>
</feature>
<feature type="topological domain" description="Extracellular" evidence="5">
    <location>
        <begin position="23"/>
        <end position="253"/>
    </location>
</feature>
<feature type="transmembrane region" description="Helical" evidence="5">
    <location>
        <begin position="254"/>
        <end position="274"/>
    </location>
</feature>
<feature type="topological domain" description="Cytoplasmic" evidence="5">
    <location>
        <begin position="275"/>
        <end position="309"/>
    </location>
</feature>
<feature type="region of interest" description="Disordered" evidence="6">
    <location>
        <begin position="28"/>
        <end position="57"/>
    </location>
</feature>
<feature type="region of interest" description="Disordered" evidence="6">
    <location>
        <begin position="145"/>
        <end position="185"/>
    </location>
</feature>
<feature type="region of interest" description="Disordered" evidence="6">
    <location>
        <begin position="283"/>
        <end position="309"/>
    </location>
</feature>
<feature type="compositionally biased region" description="Acidic residues" evidence="6">
    <location>
        <begin position="32"/>
        <end position="42"/>
    </location>
</feature>
<feature type="compositionally biased region" description="Low complexity" evidence="6">
    <location>
        <begin position="173"/>
        <end position="183"/>
    </location>
</feature>
<feature type="site" description="Cleavage" evidence="1">
    <location>
        <begin position="241"/>
        <end position="242"/>
    </location>
</feature>
<feature type="modified residue" description="Phosphoserine" evidence="2">
    <location>
        <position position="284"/>
    </location>
</feature>
<feature type="glycosylation site" description="O-linked (Xyl...) (chondroitin sulfate) serine" evidence="3">
    <location>
        <position position="37"/>
    </location>
</feature>
<feature type="glycosylation site" description="N-linked (GlcNAc...) asparagine" evidence="5">
    <location>
        <position position="43"/>
    </location>
</feature>
<feature type="glycosylation site" description="O-linked (Xyl...) (heparan sulfate) serine" evidence="1">
    <location>
        <position position="45"/>
    </location>
</feature>
<feature type="glycosylation site" description="O-linked (Xyl...) (heparan sulfate) serine" evidence="1">
    <location>
        <position position="47"/>
    </location>
</feature>
<feature type="glycosylation site" description="O-linked (Xyl...) (chondroitin sulfate) serine" evidence="2">
    <location>
        <position position="205"/>
    </location>
</feature>
<feature type="glycosylation site" description="O-linked (Xyl...) (chondroitin sulfate) serine" evidence="3">
    <location>
        <position position="215"/>
    </location>
</feature>